<gene>
    <name type="ORF">AAEL005901</name>
</gene>
<gene>
    <name type="ORF">AAEL013158</name>
</gene>
<reference key="1">
    <citation type="journal article" date="2007" name="BMC Genomics">
        <title>An annotated catalogue of salivary gland transcripts in the adult female mosquito, Aedes aegypti.</title>
        <authorList>
            <person name="Ribeiro J.M.C."/>
            <person name="Arca B."/>
            <person name="Lombardo F."/>
            <person name="Calvo E."/>
            <person name="Phan V.M."/>
            <person name="Chandra P.K."/>
            <person name="Wikel S.K."/>
        </authorList>
    </citation>
    <scope>NUCLEOTIDE SEQUENCE [LARGE SCALE MRNA] (AAEL005901)</scope>
    <source>
        <strain>Black-eyed Liverpool</strain>
        <tissue>Salivary gland</tissue>
    </source>
</reference>
<reference key="2">
    <citation type="journal article" date="2007" name="Science">
        <title>Genome sequence of Aedes aegypti, a major arbovirus vector.</title>
        <authorList>
            <person name="Nene V."/>
            <person name="Wortman J.R."/>
            <person name="Lawson D."/>
            <person name="Haas B.J."/>
            <person name="Kodira C.D."/>
            <person name="Tu Z.J."/>
            <person name="Loftus B.J."/>
            <person name="Xi Z."/>
            <person name="Megy K."/>
            <person name="Grabherr M."/>
            <person name="Ren Q."/>
            <person name="Zdobnov E.M."/>
            <person name="Lobo N.F."/>
            <person name="Campbell K.S."/>
            <person name="Brown S.E."/>
            <person name="Bonaldo M.F."/>
            <person name="Zhu J."/>
            <person name="Sinkins S.P."/>
            <person name="Hogenkamp D.G."/>
            <person name="Amedeo P."/>
            <person name="Arensburger P."/>
            <person name="Atkinson P.W."/>
            <person name="Bidwell S.L."/>
            <person name="Biedler J."/>
            <person name="Birney E."/>
            <person name="Bruggner R.V."/>
            <person name="Costas J."/>
            <person name="Coy M.R."/>
            <person name="Crabtree J."/>
            <person name="Crawford M."/>
            <person name="DeBruyn B."/>
            <person name="DeCaprio D."/>
            <person name="Eiglmeier K."/>
            <person name="Eisenstadt E."/>
            <person name="El-Dorry H."/>
            <person name="Gelbart W.M."/>
            <person name="Gomes S.L."/>
            <person name="Hammond M."/>
            <person name="Hannick L.I."/>
            <person name="Hogan J.R."/>
            <person name="Holmes M.H."/>
            <person name="Jaffe D."/>
            <person name="Johnston S.J."/>
            <person name="Kennedy R.C."/>
            <person name="Koo H."/>
            <person name="Kravitz S."/>
            <person name="Kriventseva E.V."/>
            <person name="Kulp D."/>
            <person name="Labutti K."/>
            <person name="Lee E."/>
            <person name="Li S."/>
            <person name="Lovin D.D."/>
            <person name="Mao C."/>
            <person name="Mauceli E."/>
            <person name="Menck C.F."/>
            <person name="Miller J.R."/>
            <person name="Montgomery P."/>
            <person name="Mori A."/>
            <person name="Nascimento A.L."/>
            <person name="Naveira H.F."/>
            <person name="Nusbaum C."/>
            <person name="O'Leary S.B."/>
            <person name="Orvis J."/>
            <person name="Pertea M."/>
            <person name="Quesneville H."/>
            <person name="Reidenbach K.R."/>
            <person name="Rogers Y.-H.C."/>
            <person name="Roth C.W."/>
            <person name="Schneider J.R."/>
            <person name="Schatz M."/>
            <person name="Shumway M."/>
            <person name="Stanke M."/>
            <person name="Stinson E.O."/>
            <person name="Tubio J.M.C."/>
            <person name="Vanzee J.P."/>
            <person name="Verjovski-Almeida S."/>
            <person name="Werner D."/>
            <person name="White O.R."/>
            <person name="Wyder S."/>
            <person name="Zeng Q."/>
            <person name="Zhao Q."/>
            <person name="Zhao Y."/>
            <person name="Hill C.A."/>
            <person name="Raikhel A.S."/>
            <person name="Soares M.B."/>
            <person name="Knudson D.L."/>
            <person name="Lee N.H."/>
            <person name="Galagan J."/>
            <person name="Salzberg S.L."/>
            <person name="Paulsen I.T."/>
            <person name="Dimopoulos G."/>
            <person name="Collins F.H."/>
            <person name="Bruce B."/>
            <person name="Fraser-Liggett C.M."/>
            <person name="Severson D.W."/>
        </authorList>
    </citation>
    <scope>NUCLEOTIDE SEQUENCE [LARGE SCALE GENOMIC DNA] (AAEL005901 AND AAEL013158)</scope>
    <source>
        <strain>LVPib12</strain>
    </source>
</reference>
<evidence type="ECO:0000255" key="1">
    <source>
        <dbReference type="HAMAP-Rule" id="MF_03122"/>
    </source>
</evidence>
<evidence type="ECO:0000256" key="2">
    <source>
        <dbReference type="SAM" id="MobiDB-lite"/>
    </source>
</evidence>
<evidence type="ECO:0000305" key="3"/>
<organism>
    <name type="scientific">Aedes aegypti</name>
    <name type="common">Yellowfever mosquito</name>
    <name type="synonym">Culex aegypti</name>
    <dbReference type="NCBI Taxonomy" id="7159"/>
    <lineage>
        <taxon>Eukaryota</taxon>
        <taxon>Metazoa</taxon>
        <taxon>Ecdysozoa</taxon>
        <taxon>Arthropoda</taxon>
        <taxon>Hexapoda</taxon>
        <taxon>Insecta</taxon>
        <taxon>Pterygota</taxon>
        <taxon>Neoptera</taxon>
        <taxon>Endopterygota</taxon>
        <taxon>Diptera</taxon>
        <taxon>Nematocera</taxon>
        <taxon>Culicoidea</taxon>
        <taxon>Culicidae</taxon>
        <taxon>Culicinae</taxon>
        <taxon>Aedini</taxon>
        <taxon>Aedes</taxon>
        <taxon>Stegomyia</taxon>
    </lineage>
</organism>
<proteinExistence type="evidence at transcript level"/>
<keyword id="KW-0963">Cytoplasm</keyword>
<keyword id="KW-1185">Reference proteome</keyword>
<keyword id="KW-0687">Ribonucleoprotein</keyword>
<keyword id="KW-0689">Ribosomal protein</keyword>
<name>RS3A_AEDAE</name>
<comment type="subunit">
    <text evidence="1">Component of the small ribosomal subunit. Mature ribosomes consist of a small (40S) and a large (60S) subunit. The 40S subunit contains about 33 different proteins and 1 molecule of RNA (18S). The 60S subunit contains about 49 different proteins and 3 molecules of RNA (28S, 5.8S and 5S).</text>
</comment>
<comment type="subcellular location">
    <subcellularLocation>
        <location evidence="1">Cytoplasm</location>
    </subcellularLocation>
</comment>
<comment type="similarity">
    <text evidence="1">Belongs to the eukaryotic ribosomal protein eS1 family.</text>
</comment>
<feature type="initiator methionine" description="Removed" evidence="1">
    <location>
        <position position="1"/>
    </location>
</feature>
<feature type="chain" id="PRO_0000389299" description="Small ribosomal subunit protein eS1">
    <location>
        <begin position="2"/>
        <end position="270"/>
    </location>
</feature>
<feature type="region of interest" description="Disordered" evidence="2">
    <location>
        <begin position="1"/>
        <end position="21"/>
    </location>
</feature>
<feature type="region of interest" description="Disordered" evidence="2">
    <location>
        <begin position="238"/>
        <end position="270"/>
    </location>
</feature>
<sequence length="270" mass="30125">MAVGKNKGTSKGGKKGSKKKVVDPFTRKDWYDVKAPNMFSNRQVGKTLVNRTQGTRIASDGLKGRVFEVSLADLQNDTDAERSFRKFKLIAEDVHGRNVLCNFHGMDLTTDKLRSMVKKWQTLIECSVDVKTTDGYLLRVFCIGFTIKDSVSQRKTCYAQHSQIKEIRRKMTTIITRDVTSSDLKEVVNKLLPDSIAKDIEKSCQGIYPLHDVYIRKVKVLKKPRFDLANLLELHGDGGGKGAEVSTGAAEGGVTIDRPEGYEPPVQESV</sequence>
<protein>
    <recommendedName>
        <fullName evidence="1">Small ribosomal subunit protein eS1</fullName>
    </recommendedName>
    <alternativeName>
        <fullName evidence="3">40S ribosomal protein S3a</fullName>
    </alternativeName>
</protein>
<accession>Q1HRR3</accession>
<dbReference type="EMBL" id="DQ440031">
    <property type="protein sequence ID" value="ABF18064.1"/>
    <property type="molecule type" value="mRNA"/>
</dbReference>
<dbReference type="EMBL" id="CH477983">
    <property type="protein sequence ID" value="EAT34614.1"/>
    <property type="molecule type" value="Genomic_DNA"/>
</dbReference>
<dbReference type="EMBL" id="CH477364">
    <property type="protein sequence ID" value="EAT42588.1"/>
    <property type="molecule type" value="Genomic_DNA"/>
</dbReference>
<dbReference type="RefSeq" id="XP_001651594.1">
    <property type="nucleotide sequence ID" value="XM_001651544.1"/>
</dbReference>
<dbReference type="SMR" id="Q1HRR3"/>
<dbReference type="FunCoup" id="Q1HRR3">
    <property type="interactions" value="880"/>
</dbReference>
<dbReference type="STRING" id="7159.Q1HRR3"/>
<dbReference type="PaxDb" id="7159-AAEL005901-PB"/>
<dbReference type="EnsemblMetazoa" id="AAEL005901-RC">
    <property type="protein sequence ID" value="AAEL005901-PC"/>
    <property type="gene ID" value="AAEL005901"/>
</dbReference>
<dbReference type="EnsemblMetazoa" id="AAEL019789-RA">
    <property type="protein sequence ID" value="AAEL019789-PA"/>
    <property type="gene ID" value="AAEL019789"/>
</dbReference>
<dbReference type="GeneID" id="5577309"/>
<dbReference type="KEGG" id="aag:5577309"/>
<dbReference type="VEuPathDB" id="VectorBase:AAEL005901"/>
<dbReference type="VEuPathDB" id="VectorBase:AAEL019789"/>
<dbReference type="eggNOG" id="KOG1628">
    <property type="taxonomic scope" value="Eukaryota"/>
</dbReference>
<dbReference type="HOGENOM" id="CLU_062507_0_1_1"/>
<dbReference type="InParanoid" id="Q1HRR3"/>
<dbReference type="OMA" id="MCEIITR"/>
<dbReference type="OrthoDB" id="9834376at2759"/>
<dbReference type="PhylomeDB" id="Q1HRR3"/>
<dbReference type="Proteomes" id="UP000008820">
    <property type="component" value="Chromosome 3"/>
</dbReference>
<dbReference type="Proteomes" id="UP000682892">
    <property type="component" value="Chromosome 3"/>
</dbReference>
<dbReference type="Proteomes" id="UP000682892">
    <property type="component" value="Unassembled WGS sequence"/>
</dbReference>
<dbReference type="GO" id="GO:0022627">
    <property type="term" value="C:cytosolic small ribosomal subunit"/>
    <property type="evidence" value="ECO:0007669"/>
    <property type="project" value="UniProtKB-UniRule"/>
</dbReference>
<dbReference type="GO" id="GO:0003735">
    <property type="term" value="F:structural constituent of ribosome"/>
    <property type="evidence" value="ECO:0007669"/>
    <property type="project" value="UniProtKB-UniRule"/>
</dbReference>
<dbReference type="GO" id="GO:0006412">
    <property type="term" value="P:translation"/>
    <property type="evidence" value="ECO:0007669"/>
    <property type="project" value="UniProtKB-UniRule"/>
</dbReference>
<dbReference type="HAMAP" id="MF_03122">
    <property type="entry name" value="Ribosomal_eS1_euk"/>
    <property type="match status" value="1"/>
</dbReference>
<dbReference type="InterPro" id="IPR001593">
    <property type="entry name" value="Ribosomal_eS1"/>
</dbReference>
<dbReference type="InterPro" id="IPR018281">
    <property type="entry name" value="Ribosomal_eS1_CS"/>
</dbReference>
<dbReference type="InterPro" id="IPR027500">
    <property type="entry name" value="Ribosomal_eS1_euk"/>
</dbReference>
<dbReference type="PANTHER" id="PTHR11830">
    <property type="entry name" value="40S RIBOSOMAL PROTEIN S3A"/>
    <property type="match status" value="1"/>
</dbReference>
<dbReference type="Pfam" id="PF01015">
    <property type="entry name" value="Ribosomal_S3Ae"/>
    <property type="match status" value="1"/>
</dbReference>
<dbReference type="SMART" id="SM01397">
    <property type="entry name" value="Ribosomal_S3Ae"/>
    <property type="match status" value="1"/>
</dbReference>
<dbReference type="PROSITE" id="PS01191">
    <property type="entry name" value="RIBOSOMAL_S3AE"/>
    <property type="match status" value="1"/>
</dbReference>